<name>GREA_BART1</name>
<organism>
    <name type="scientific">Bartonella tribocorum (strain CIP 105476 / IBS 506)</name>
    <dbReference type="NCBI Taxonomy" id="382640"/>
    <lineage>
        <taxon>Bacteria</taxon>
        <taxon>Pseudomonadati</taxon>
        <taxon>Pseudomonadota</taxon>
        <taxon>Alphaproteobacteria</taxon>
        <taxon>Hyphomicrobiales</taxon>
        <taxon>Bartonellaceae</taxon>
        <taxon>Bartonella</taxon>
    </lineage>
</organism>
<comment type="function">
    <text evidence="1">Necessary for efficient RNA polymerase transcription elongation past template-encoded arresting sites. The arresting sites in DNA have the property of trapping a certain fraction of elongating RNA polymerases that pass through, resulting in locked ternary complexes. Cleavage of the nascent transcript by cleavage factors such as GreA or GreB allows the resumption of elongation from the new 3'terminus. GreA releases sequences of 2 to 3 nucleotides.</text>
</comment>
<comment type="similarity">
    <text evidence="1">Belongs to the GreA/GreB family.</text>
</comment>
<sequence>MEKVPMTTAGFESLKEELRWRQQQERPRIIEAISEARAHGDLSENAEYHAAKEAQSHNEGRINELEDYIARAEVIDVSRLSGDKIKFGATIKLLDEDTEEKKVYQIVGDQEADVKIGKISISSPIARALIGKQEGDVIEVNAPGGAHNYEIIKVQYI</sequence>
<keyword id="KW-0238">DNA-binding</keyword>
<keyword id="KW-0804">Transcription</keyword>
<keyword id="KW-0805">Transcription regulation</keyword>
<reference key="1">
    <citation type="journal article" date="2007" name="Nat. Genet.">
        <title>Genomic analysis of Bartonella identifies type IV secretion systems as host adaptability factors.</title>
        <authorList>
            <person name="Saenz H.L."/>
            <person name="Engel P."/>
            <person name="Stoeckli M.C."/>
            <person name="Lanz C."/>
            <person name="Raddatz G."/>
            <person name="Vayssier-Taussat M."/>
            <person name="Birtles R."/>
            <person name="Schuster S.C."/>
            <person name="Dehio C."/>
        </authorList>
    </citation>
    <scope>NUCLEOTIDE SEQUENCE [LARGE SCALE GENOMIC DNA]</scope>
    <source>
        <strain>CIP 105476 / IBS 506</strain>
    </source>
</reference>
<protein>
    <recommendedName>
        <fullName evidence="1">Transcription elongation factor GreA</fullName>
    </recommendedName>
    <alternativeName>
        <fullName evidence="1">Transcript cleavage factor GreA</fullName>
    </alternativeName>
</protein>
<gene>
    <name evidence="1" type="primary">greA</name>
    <name type="ordered locus">BT_0745</name>
</gene>
<proteinExistence type="inferred from homology"/>
<accession>A9IRC3</accession>
<dbReference type="EMBL" id="AM260525">
    <property type="protein sequence ID" value="CAK01164.1"/>
    <property type="molecule type" value="Genomic_DNA"/>
</dbReference>
<dbReference type="RefSeq" id="WP_005773808.1">
    <property type="nucleotide sequence ID" value="NC_010161.1"/>
</dbReference>
<dbReference type="SMR" id="A9IRC3"/>
<dbReference type="KEGG" id="btr:BT_0745"/>
<dbReference type="eggNOG" id="COG0782">
    <property type="taxonomic scope" value="Bacteria"/>
</dbReference>
<dbReference type="HOGENOM" id="CLU_101379_2_0_5"/>
<dbReference type="Proteomes" id="UP000001592">
    <property type="component" value="Chromosome"/>
</dbReference>
<dbReference type="GO" id="GO:0003677">
    <property type="term" value="F:DNA binding"/>
    <property type="evidence" value="ECO:0007669"/>
    <property type="project" value="UniProtKB-UniRule"/>
</dbReference>
<dbReference type="GO" id="GO:0070063">
    <property type="term" value="F:RNA polymerase binding"/>
    <property type="evidence" value="ECO:0007669"/>
    <property type="project" value="InterPro"/>
</dbReference>
<dbReference type="GO" id="GO:0006354">
    <property type="term" value="P:DNA-templated transcription elongation"/>
    <property type="evidence" value="ECO:0007669"/>
    <property type="project" value="TreeGrafter"/>
</dbReference>
<dbReference type="GO" id="GO:0032784">
    <property type="term" value="P:regulation of DNA-templated transcription elongation"/>
    <property type="evidence" value="ECO:0007669"/>
    <property type="project" value="UniProtKB-UniRule"/>
</dbReference>
<dbReference type="FunFam" id="1.10.287.180:FF:000001">
    <property type="entry name" value="Transcription elongation factor GreA"/>
    <property type="match status" value="1"/>
</dbReference>
<dbReference type="FunFam" id="3.10.50.30:FF:000001">
    <property type="entry name" value="Transcription elongation factor GreA"/>
    <property type="match status" value="1"/>
</dbReference>
<dbReference type="Gene3D" id="3.10.50.30">
    <property type="entry name" value="Transcription elongation factor, GreA/GreB, C-terminal domain"/>
    <property type="match status" value="1"/>
</dbReference>
<dbReference type="Gene3D" id="1.10.287.180">
    <property type="entry name" value="Transcription elongation factor, GreA/GreB, N-terminal domain"/>
    <property type="match status" value="1"/>
</dbReference>
<dbReference type="HAMAP" id="MF_00105">
    <property type="entry name" value="GreA_GreB"/>
    <property type="match status" value="1"/>
</dbReference>
<dbReference type="InterPro" id="IPR036953">
    <property type="entry name" value="GreA/GreB_C_sf"/>
</dbReference>
<dbReference type="InterPro" id="IPR018151">
    <property type="entry name" value="TF_GreA/GreB_CS"/>
</dbReference>
<dbReference type="InterPro" id="IPR006359">
    <property type="entry name" value="Tscrpt_elong_fac_GreA"/>
</dbReference>
<dbReference type="InterPro" id="IPR028624">
    <property type="entry name" value="Tscrpt_elong_fac_GreA/B"/>
</dbReference>
<dbReference type="InterPro" id="IPR001437">
    <property type="entry name" value="Tscrpt_elong_fac_GreA/B_C"/>
</dbReference>
<dbReference type="InterPro" id="IPR023459">
    <property type="entry name" value="Tscrpt_elong_fac_GreA/B_fam"/>
</dbReference>
<dbReference type="InterPro" id="IPR022691">
    <property type="entry name" value="Tscrpt_elong_fac_GreA/B_N"/>
</dbReference>
<dbReference type="InterPro" id="IPR036805">
    <property type="entry name" value="Tscrpt_elong_fac_GreA/B_N_sf"/>
</dbReference>
<dbReference type="NCBIfam" id="TIGR01462">
    <property type="entry name" value="greA"/>
    <property type="match status" value="1"/>
</dbReference>
<dbReference type="NCBIfam" id="NF001261">
    <property type="entry name" value="PRK00226.1-2"/>
    <property type="match status" value="1"/>
</dbReference>
<dbReference type="NCBIfam" id="NF001263">
    <property type="entry name" value="PRK00226.1-4"/>
    <property type="match status" value="1"/>
</dbReference>
<dbReference type="NCBIfam" id="NF001264">
    <property type="entry name" value="PRK00226.1-5"/>
    <property type="match status" value="1"/>
</dbReference>
<dbReference type="PANTHER" id="PTHR30437">
    <property type="entry name" value="TRANSCRIPTION ELONGATION FACTOR GREA"/>
    <property type="match status" value="1"/>
</dbReference>
<dbReference type="PANTHER" id="PTHR30437:SF4">
    <property type="entry name" value="TRANSCRIPTION ELONGATION FACTOR GREA"/>
    <property type="match status" value="1"/>
</dbReference>
<dbReference type="Pfam" id="PF01272">
    <property type="entry name" value="GreA_GreB"/>
    <property type="match status" value="1"/>
</dbReference>
<dbReference type="Pfam" id="PF03449">
    <property type="entry name" value="GreA_GreB_N"/>
    <property type="match status" value="1"/>
</dbReference>
<dbReference type="PIRSF" id="PIRSF006092">
    <property type="entry name" value="GreA_GreB"/>
    <property type="match status" value="1"/>
</dbReference>
<dbReference type="SUPFAM" id="SSF54534">
    <property type="entry name" value="FKBP-like"/>
    <property type="match status" value="1"/>
</dbReference>
<dbReference type="SUPFAM" id="SSF46557">
    <property type="entry name" value="GreA transcript cleavage protein, N-terminal domain"/>
    <property type="match status" value="1"/>
</dbReference>
<dbReference type="PROSITE" id="PS00829">
    <property type="entry name" value="GREAB_1"/>
    <property type="match status" value="1"/>
</dbReference>
<dbReference type="PROSITE" id="PS00830">
    <property type="entry name" value="GREAB_2"/>
    <property type="match status" value="1"/>
</dbReference>
<evidence type="ECO:0000255" key="1">
    <source>
        <dbReference type="HAMAP-Rule" id="MF_00105"/>
    </source>
</evidence>
<feature type="chain" id="PRO_1000075862" description="Transcription elongation factor GreA">
    <location>
        <begin position="1"/>
        <end position="157"/>
    </location>
</feature>